<feature type="chain" id="PRO_0000418224" description="CRISPR system single-strand-specific deoxyribonuclease Cas10/Csm1 (subtype III-A)">
    <location>
        <begin position="1"/>
        <end position="809"/>
    </location>
</feature>
<feature type="domain" description="HD" evidence="4">
    <location>
        <begin position="1"/>
        <end position="98"/>
    </location>
</feature>
<feature type="domain" description="GGDEF" evidence="3">
    <location>
        <begin position="547"/>
        <end position="700"/>
    </location>
</feature>
<feature type="strand" evidence="9">
    <location>
        <begin position="549"/>
        <end position="556"/>
    </location>
</feature>
<feature type="helix" evidence="9">
    <location>
        <begin position="559"/>
        <end position="564"/>
    </location>
</feature>
<feature type="helix" evidence="9">
    <location>
        <begin position="578"/>
        <end position="593"/>
    </location>
</feature>
<feature type="helix" evidence="9">
    <location>
        <begin position="595"/>
        <end position="601"/>
    </location>
</feature>
<feature type="strand" evidence="9">
    <location>
        <begin position="607"/>
        <end position="609"/>
    </location>
</feature>
<feature type="strand" evidence="8">
    <location>
        <begin position="611"/>
        <end position="613"/>
    </location>
</feature>
<feature type="strand" evidence="9">
    <location>
        <begin position="618"/>
        <end position="625"/>
    </location>
</feature>
<feature type="strand" evidence="9">
    <location>
        <begin position="628"/>
        <end position="634"/>
    </location>
</feature>
<feature type="helix" evidence="9">
    <location>
        <begin position="635"/>
        <end position="652"/>
    </location>
</feature>
<feature type="turn" evidence="9">
    <location>
        <begin position="653"/>
        <end position="655"/>
    </location>
</feature>
<feature type="strand" evidence="9">
    <location>
        <begin position="659"/>
        <end position="666"/>
    </location>
</feature>
<feature type="helix" evidence="9">
    <location>
        <begin position="672"/>
        <end position="687"/>
    </location>
</feature>
<feature type="strand" evidence="8">
    <location>
        <begin position="689"/>
        <end position="691"/>
    </location>
</feature>
<feature type="strand" evidence="9">
    <location>
        <begin position="694"/>
        <end position="696"/>
    </location>
</feature>
<feature type="strand" evidence="9">
    <location>
        <begin position="698"/>
        <end position="700"/>
    </location>
</feature>
<feature type="strand" evidence="9">
    <location>
        <begin position="703"/>
        <end position="705"/>
    </location>
</feature>
<feature type="helix" evidence="9">
    <location>
        <begin position="706"/>
        <end position="711"/>
    </location>
</feature>
<feature type="helix" evidence="9">
    <location>
        <begin position="712"/>
        <end position="716"/>
    </location>
</feature>
<feature type="helix" evidence="9">
    <location>
        <begin position="717"/>
        <end position="723"/>
    </location>
</feature>
<feature type="turn" evidence="9">
    <location>
        <begin position="724"/>
        <end position="727"/>
    </location>
</feature>
<feature type="helix" evidence="9">
    <location>
        <begin position="732"/>
        <end position="740"/>
    </location>
</feature>
<feature type="helix" evidence="9">
    <location>
        <begin position="756"/>
        <end position="759"/>
    </location>
</feature>
<feature type="helix" evidence="9">
    <location>
        <begin position="773"/>
        <end position="782"/>
    </location>
</feature>
<feature type="strand" evidence="9">
    <location>
        <begin position="783"/>
        <end position="786"/>
    </location>
</feature>
<feature type="helix" evidence="9">
    <location>
        <begin position="788"/>
        <end position="803"/>
    </location>
</feature>
<sequence length="809" mass="90747">MNPQLIEAIIGCLLHDIGKPVQRAALGYPGRHSAIGRAFMKKVWLRDSRNPSQFTDEVDEADIGVSDRRILDAISYHHSSALRTAAENGRLAADAPAYIAYNIAAGTDRRKADSDDGHGASTWDPDTPLYSMFNRFGSGTANLAFAPEMLDDRKPINIPSPRRIEFDKDRYAAIVNKLKAILVDLERSDTYLASLLNVLEATLSFVPSSTDASEVVDVSLFDHLKLTGALGACIWHYLQATGQSDFKSALFDKQDTFYNEKAFLLTTFDVSGIQDFIYTIHSSGAAKMLRARSFYLEMLTEHLIDELLARVGLSRANLNYSGGGHAYLLLPNTESARKSVEQFEREANDWLLENFATRLFIATGSVPLAANDLMRRPNESASQASNRALRYSGLYRELSEQLSAKKLARYSADQLRELNSRDHDGQKGDRECSVCHTVNRTVSADDEPKCSLCQALTAASSQIQSESRRFLLISDGATKGLPLPFGATLTFCSRADADKALQQPQTRRRYAKNKFFAGECLGTGLWVGDYVAQMEFGDYVKRASGIARLGVLRLDVDNLGQAFTHGFMEQGNGKFNTISRTAAFSRMLSLFFRQHINYVLARPKLRPITGDDPARPREATIIYSGGDDVFVVGAWDDVIEFGIELRERFHEFTQGKLTVSAGIGMFPDKYPISVMAREVGDLEDAAKSLPGKNGVALFDREFTFGWDELLSKVIEEKYRHIADYFSGNEERGMAFIYKLLELLAERDDRITKARWVYFLTRMRNPTGDTAPFQQFANRLHQWFQDPTDAKQLKTALHLYIYRTRKEESE</sequence>
<organism>
    <name type="scientific">Mycobacterium tuberculosis (strain ATCC 25618 / H37Rv)</name>
    <dbReference type="NCBI Taxonomy" id="83332"/>
    <lineage>
        <taxon>Bacteria</taxon>
        <taxon>Bacillati</taxon>
        <taxon>Actinomycetota</taxon>
        <taxon>Actinomycetes</taxon>
        <taxon>Mycobacteriales</taxon>
        <taxon>Mycobacteriaceae</taxon>
        <taxon>Mycobacterium</taxon>
        <taxon>Mycobacterium tuberculosis complex</taxon>
    </lineage>
</organism>
<evidence type="ECO:0000250" key="1">
    <source>
        <dbReference type="UniProtKB" id="A0A0A7HFE1"/>
    </source>
</evidence>
<evidence type="ECO:0000250" key="2">
    <source>
        <dbReference type="UniProtKB" id="B6YWB8"/>
    </source>
</evidence>
<evidence type="ECO:0000255" key="3">
    <source>
        <dbReference type="PROSITE-ProRule" id="PRU00095"/>
    </source>
</evidence>
<evidence type="ECO:0000255" key="4">
    <source>
        <dbReference type="PROSITE-ProRule" id="PRU01175"/>
    </source>
</evidence>
<evidence type="ECO:0000269" key="5">
    <source>
    </source>
</evidence>
<evidence type="ECO:0000305" key="6"/>
<evidence type="ECO:0000305" key="7">
    <source>
    </source>
</evidence>
<evidence type="ECO:0007829" key="8">
    <source>
        <dbReference type="PDB" id="6KBD"/>
    </source>
</evidence>
<evidence type="ECO:0007829" key="9">
    <source>
        <dbReference type="PDB" id="6KC0"/>
    </source>
</evidence>
<gene>
    <name type="primary">cas10</name>
    <name type="synonym">csm1</name>
    <name type="ordered locus">Rv2823c</name>
</gene>
<proteinExistence type="evidence at protein level"/>
<protein>
    <recommendedName>
        <fullName>CRISPR system single-strand-specific deoxyribonuclease Cas10/Csm1 (subtype III-A)</fullName>
        <shortName>ssDNase Cas10</shortName>
        <ecNumber>3.1.-.-</ecNumber>
    </recommendedName>
    <alternativeName>
        <fullName>Cyclic oligoadenylate synthase</fullName>
        <ecNumber evidence="1">2.7.7.-</ecNumber>
    </alternativeName>
</protein>
<reference key="1">
    <citation type="journal article" date="1998" name="Nature">
        <title>Deciphering the biology of Mycobacterium tuberculosis from the complete genome sequence.</title>
        <authorList>
            <person name="Cole S.T."/>
            <person name="Brosch R."/>
            <person name="Parkhill J."/>
            <person name="Garnier T."/>
            <person name="Churcher C.M."/>
            <person name="Harris D.E."/>
            <person name="Gordon S.V."/>
            <person name="Eiglmeier K."/>
            <person name="Gas S."/>
            <person name="Barry C.E. III"/>
            <person name="Tekaia F."/>
            <person name="Badcock K."/>
            <person name="Basham D."/>
            <person name="Brown D."/>
            <person name="Chillingworth T."/>
            <person name="Connor R."/>
            <person name="Davies R.M."/>
            <person name="Devlin K."/>
            <person name="Feltwell T."/>
            <person name="Gentles S."/>
            <person name="Hamlin N."/>
            <person name="Holroyd S."/>
            <person name="Hornsby T."/>
            <person name="Jagels K."/>
            <person name="Krogh A."/>
            <person name="McLean J."/>
            <person name="Moule S."/>
            <person name="Murphy L.D."/>
            <person name="Oliver S."/>
            <person name="Osborne J."/>
            <person name="Quail M.A."/>
            <person name="Rajandream M.A."/>
            <person name="Rogers J."/>
            <person name="Rutter S."/>
            <person name="Seeger K."/>
            <person name="Skelton S."/>
            <person name="Squares S."/>
            <person name="Squares R."/>
            <person name="Sulston J.E."/>
            <person name="Taylor K."/>
            <person name="Whitehead S."/>
            <person name="Barrell B.G."/>
        </authorList>
    </citation>
    <scope>NUCLEOTIDE SEQUENCE [LARGE SCALE GENOMIC DNA]</scope>
    <source>
        <strain>ATCC 25618 / H37Rv</strain>
    </source>
</reference>
<reference key="2">
    <citation type="journal article" date="2011" name="Mol. Cell. Proteomics">
        <title>Proteogenomic analysis of Mycobacterium tuberculosis by high resolution mass spectrometry.</title>
        <authorList>
            <person name="Kelkar D.S."/>
            <person name="Kumar D."/>
            <person name="Kumar P."/>
            <person name="Balakrishnan L."/>
            <person name="Muthusamy B."/>
            <person name="Yadav A.K."/>
            <person name="Shrivastava P."/>
            <person name="Marimuthu A."/>
            <person name="Anand S."/>
            <person name="Sundaram H."/>
            <person name="Kingsbury R."/>
            <person name="Harsha H.C."/>
            <person name="Nair B."/>
            <person name="Prasad T.S."/>
            <person name="Chauhan D.S."/>
            <person name="Katoch K."/>
            <person name="Katoch V.M."/>
            <person name="Kumar P."/>
            <person name="Chaerkady R."/>
            <person name="Ramachandran S."/>
            <person name="Dash D."/>
            <person name="Pandey A."/>
        </authorList>
    </citation>
    <scope>IDENTIFICATION BY MASS SPECTROMETRY [LARGE SCALE ANALYSIS]</scope>
    <source>
        <strain>ATCC 25618 / H37Rv</strain>
    </source>
</reference>
<reference key="3">
    <citation type="journal article" date="2019" name="FASEB J.">
        <title>Mycobacterium tuberculosis type III-A CRISPR/Cas system crRNA and its maturation have atypical features.</title>
        <authorList>
            <person name="Wei W."/>
            <person name="Zhang S."/>
            <person name="Fleming J."/>
            <person name="Chen Y."/>
            <person name="Li Z."/>
            <person name="Fan S."/>
            <person name="Liu Y."/>
            <person name="Wang W."/>
            <person name="Wang T."/>
            <person name="Liu Y."/>
            <person name="Ren B."/>
            <person name="Wang M."/>
            <person name="Jiao J."/>
            <person name="Chen Y."/>
            <person name="Zhou Y."/>
            <person name="Zhou Y."/>
            <person name="Gu S."/>
            <person name="Zhang X."/>
            <person name="Wan L."/>
            <person name="Chen T."/>
            <person name="Zhou L."/>
            <person name="Chen Y."/>
            <person name="Zhang X.E."/>
            <person name="Li C."/>
            <person name="Zhang H."/>
            <person name="Bi L."/>
        </authorList>
    </citation>
    <scope>FUNCTION IN PLASMID RESISTANCE</scope>
    <scope>SUBUNIT</scope>
    <scope>DISRUPTION PHENOTYPE</scope>
    <source>
        <strain>H37Rv</strain>
    </source>
</reference>
<dbReference type="EC" id="3.1.-.-"/>
<dbReference type="EC" id="2.7.7.-" evidence="1"/>
<dbReference type="EMBL" id="AL123456">
    <property type="protein sequence ID" value="CCP45623.1"/>
    <property type="molecule type" value="Genomic_DNA"/>
</dbReference>
<dbReference type="PIR" id="B70692">
    <property type="entry name" value="B70692"/>
</dbReference>
<dbReference type="RefSeq" id="NP_217339.1">
    <property type="nucleotide sequence ID" value="NC_000962.3"/>
</dbReference>
<dbReference type="RefSeq" id="WP_003911999.1">
    <property type="nucleotide sequence ID" value="NZ_NVQJ01000006.1"/>
</dbReference>
<dbReference type="PDB" id="6KBD">
    <property type="method" value="X-ray"/>
    <property type="resolution" value="3.00 A"/>
    <property type="chains" value="A=534-809"/>
</dbReference>
<dbReference type="PDB" id="6KC0">
    <property type="method" value="X-ray"/>
    <property type="resolution" value="2.29 A"/>
    <property type="chains" value="A=534-809"/>
</dbReference>
<dbReference type="PDBsum" id="6KBD"/>
<dbReference type="PDBsum" id="6KC0"/>
<dbReference type="SMR" id="P71629"/>
<dbReference type="FunCoup" id="P71629">
    <property type="interactions" value="2"/>
</dbReference>
<dbReference type="STRING" id="83332.Rv2823c"/>
<dbReference type="PaxDb" id="83332-Rv2823c"/>
<dbReference type="DNASU" id="887735"/>
<dbReference type="GeneID" id="887735"/>
<dbReference type="KEGG" id="mtu:Rv2823c"/>
<dbReference type="KEGG" id="mtv:RVBD_2823c"/>
<dbReference type="TubercuList" id="Rv2823c"/>
<dbReference type="eggNOG" id="COG1353">
    <property type="taxonomic scope" value="Bacteria"/>
</dbReference>
<dbReference type="InParanoid" id="P71629"/>
<dbReference type="OrthoDB" id="9768769at2"/>
<dbReference type="PhylomeDB" id="P71629"/>
<dbReference type="PHI-base" id="PHI:12082"/>
<dbReference type="Proteomes" id="UP000001584">
    <property type="component" value="Chromosome"/>
</dbReference>
<dbReference type="GO" id="GO:0005576">
    <property type="term" value="C:extracellular region"/>
    <property type="evidence" value="ECO:0007005"/>
    <property type="project" value="MTBBASE"/>
</dbReference>
<dbReference type="GO" id="GO:0005886">
    <property type="term" value="C:plasma membrane"/>
    <property type="evidence" value="ECO:0007005"/>
    <property type="project" value="MTBBASE"/>
</dbReference>
<dbReference type="GO" id="GO:0005524">
    <property type="term" value="F:ATP binding"/>
    <property type="evidence" value="ECO:0007669"/>
    <property type="project" value="UniProtKB-KW"/>
</dbReference>
<dbReference type="GO" id="GO:0004519">
    <property type="term" value="F:endonuclease activity"/>
    <property type="evidence" value="ECO:0007669"/>
    <property type="project" value="UniProtKB-KW"/>
</dbReference>
<dbReference type="GO" id="GO:0004527">
    <property type="term" value="F:exonuclease activity"/>
    <property type="evidence" value="ECO:0007669"/>
    <property type="project" value="UniProtKB-KW"/>
</dbReference>
<dbReference type="GO" id="GO:0003723">
    <property type="term" value="F:RNA binding"/>
    <property type="evidence" value="ECO:0007669"/>
    <property type="project" value="UniProtKB-KW"/>
</dbReference>
<dbReference type="GO" id="GO:0016740">
    <property type="term" value="F:transferase activity"/>
    <property type="evidence" value="ECO:0007669"/>
    <property type="project" value="UniProtKB-KW"/>
</dbReference>
<dbReference type="GO" id="GO:0051607">
    <property type="term" value="P:defense response to virus"/>
    <property type="evidence" value="ECO:0007669"/>
    <property type="project" value="UniProtKB-KW"/>
</dbReference>
<dbReference type="CDD" id="cd09680">
    <property type="entry name" value="Cas10_III"/>
    <property type="match status" value="1"/>
</dbReference>
<dbReference type="FunFam" id="3.30.70.270:FF:000127">
    <property type="entry name" value="CRISPR-associated protein cas10/csm1, subtype III-a/mtube"/>
    <property type="match status" value="1"/>
</dbReference>
<dbReference type="Gene3D" id="3.30.70.270">
    <property type="match status" value="1"/>
</dbReference>
<dbReference type="InterPro" id="IPR054767">
    <property type="entry name" value="Cas10-Cmr2_palm2"/>
</dbReference>
<dbReference type="InterPro" id="IPR013408">
    <property type="entry name" value="Cas10/Csm1"/>
</dbReference>
<dbReference type="InterPro" id="IPR052117">
    <property type="entry name" value="Cas10/Csm1_subtype-III-A"/>
</dbReference>
<dbReference type="InterPro" id="IPR048693">
    <property type="entry name" value="Cmr2-like_C"/>
</dbReference>
<dbReference type="InterPro" id="IPR041062">
    <property type="entry name" value="Csm1_B"/>
</dbReference>
<dbReference type="InterPro" id="IPR000160">
    <property type="entry name" value="GGDEF_dom"/>
</dbReference>
<dbReference type="InterPro" id="IPR006674">
    <property type="entry name" value="HD_domain"/>
</dbReference>
<dbReference type="InterPro" id="IPR043128">
    <property type="entry name" value="Rev_trsase/Diguanyl_cyclase"/>
</dbReference>
<dbReference type="NCBIfam" id="TIGR02578">
    <property type="entry name" value="cas_TM1811_Csm1"/>
    <property type="match status" value="1"/>
</dbReference>
<dbReference type="PANTHER" id="PTHR36528">
    <property type="entry name" value="CRISPR SYSTEM SINGLE-STRAND-SPECIFIC DEOXYRIBONUCLEASE CAS10/CSM1 (SUBTYPE III-A)"/>
    <property type="match status" value="1"/>
</dbReference>
<dbReference type="PANTHER" id="PTHR36528:SF1">
    <property type="entry name" value="CRISPR SYSTEM SINGLE-STRAND-SPECIFIC DEOXYRIBONUCLEASE CAS10_CSM1 (SUBTYPE III-A)"/>
    <property type="match status" value="1"/>
</dbReference>
<dbReference type="Pfam" id="PF22335">
    <property type="entry name" value="Cas10-Cmr2_palm2"/>
    <property type="match status" value="1"/>
</dbReference>
<dbReference type="Pfam" id="PF20824">
    <property type="entry name" value="Cmr2_hel_dom2"/>
    <property type="match status" value="1"/>
</dbReference>
<dbReference type="Pfam" id="PF18211">
    <property type="entry name" value="Csm1_B"/>
    <property type="match status" value="1"/>
</dbReference>
<dbReference type="PROSITE" id="PS50887">
    <property type="entry name" value="GGDEF"/>
    <property type="match status" value="1"/>
</dbReference>
<dbReference type="PROSITE" id="PS51831">
    <property type="entry name" value="HD"/>
    <property type="match status" value="1"/>
</dbReference>
<name>CAS10_MYCTU</name>
<comment type="function">
    <text evidence="5 7">CRISPR (clustered regularly interspaced short palindromic repeat) is an adaptive immune system that provides protection against mobile genetic elements (viruses, transposable elements and conjugative plasmids). CRISPR clusters contain spacers, sequences complementary to antecedent mobile elements, and target invading nucleic acids. CRISPR clusters are transcribed and processed into CRISPR RNA (crRNA). The type III-A Csm effector complex binds crRNA and acts as a crRNA-guided RNase, DNase and cyclic oligoadenylate synthase; binding of target RNA cognate to the crRNA is required for all activities (Probable). This CRISPR-Cas system protects bacteria against transformation with plasmids containing DNA homologous to its spacer regions (PubMed:29979631).</text>
</comment>
<comment type="function">
    <text evidence="2">This subunit is a single-strand-specific deoxyribonuclease (ssDNase) which digests both linear and circular ssDNA; it has both exo- and endonuclease activity.</text>
</comment>
<comment type="function">
    <text evidence="1">ssDNase activity is stimulated in the ternary Csm effector complex; binding of cognate target RNA activates the ssDNase, as the target RNA is degraded ssDNA activity decreases.</text>
</comment>
<comment type="function">
    <text evidence="1">When associated with the ternary Csm effector complex (the crRNA, Cas proteins and a cognate target ssRNA) synthesizes cyclic oligoadenylates (cOA) from ATP. cOAs are second messengers that stimulate the ssRNase activity of Csm6, inducing an antiviral state important for defense against invading nucleic acids.</text>
</comment>
<comment type="cofactor">
    <cofactor evidence="1">
        <name>a divalent metal cation</name>
        <dbReference type="ChEBI" id="CHEBI:60240"/>
    </cofactor>
</comment>
<comment type="subunit">
    <text evidence="5">Part of the Csm effector complex, that includes Cas10, Csm2, Csm3, Csm4, Csm5 and mature crRNA.</text>
</comment>
<comment type="domain">
    <text evidence="1">The N-terminal HD domain has ssDNase activity. The C-terminal GGDEF domain has the cOA synthesis activity.</text>
</comment>
<comment type="disruption phenotype">
    <text evidence="5">Deletion of the entire CRISPR-Cas locus (cas6 to cas2, Rv2824c to Rv2816c) decreases resistance to plasmids encoding spacer elements about 6-fold.</text>
</comment>
<comment type="miscellaneous">
    <text evidence="7">Encoded in a type III-A CRISPR locus.</text>
</comment>
<comment type="similarity">
    <text evidence="6">Belongs to the CRISPR-associated Cas10/Csm1 family.</text>
</comment>
<accession>P71629</accession>
<accession>L0TDG3</accession>
<keyword id="KW-0002">3D-structure</keyword>
<keyword id="KW-0051">Antiviral defense</keyword>
<keyword id="KW-0067">ATP-binding</keyword>
<keyword id="KW-0255">Endonuclease</keyword>
<keyword id="KW-0269">Exonuclease</keyword>
<keyword id="KW-0378">Hydrolase</keyword>
<keyword id="KW-0540">Nuclease</keyword>
<keyword id="KW-0547">Nucleotide-binding</keyword>
<keyword id="KW-1185">Reference proteome</keyword>
<keyword id="KW-0694">RNA-binding</keyword>
<keyword id="KW-0808">Transferase</keyword>